<dbReference type="EC" id="3.5.99.6" evidence="1"/>
<dbReference type="EMBL" id="CP000020">
    <property type="protein sequence ID" value="AAW86852.1"/>
    <property type="molecule type" value="Genomic_DNA"/>
</dbReference>
<dbReference type="RefSeq" id="WP_011262751.1">
    <property type="nucleotide sequence ID" value="NZ_CAWLES010000001.1"/>
</dbReference>
<dbReference type="RefSeq" id="YP_205740.1">
    <property type="nucleotide sequence ID" value="NC_006840.2"/>
</dbReference>
<dbReference type="SMR" id="Q5E294"/>
<dbReference type="STRING" id="312309.VF_2357"/>
<dbReference type="EnsemblBacteria" id="AAW86852">
    <property type="protein sequence ID" value="AAW86852"/>
    <property type="gene ID" value="VF_2357"/>
</dbReference>
<dbReference type="GeneID" id="54165079"/>
<dbReference type="KEGG" id="vfi:VF_2357"/>
<dbReference type="PATRIC" id="fig|312309.11.peg.2396"/>
<dbReference type="eggNOG" id="COG0363">
    <property type="taxonomic scope" value="Bacteria"/>
</dbReference>
<dbReference type="HOGENOM" id="CLU_049611_0_1_6"/>
<dbReference type="OrthoDB" id="9791139at2"/>
<dbReference type="UniPathway" id="UPA00629">
    <property type="reaction ID" value="UER00684"/>
</dbReference>
<dbReference type="Proteomes" id="UP000000537">
    <property type="component" value="Chromosome I"/>
</dbReference>
<dbReference type="GO" id="GO:0005737">
    <property type="term" value="C:cytoplasm"/>
    <property type="evidence" value="ECO:0007669"/>
    <property type="project" value="TreeGrafter"/>
</dbReference>
<dbReference type="GO" id="GO:0004342">
    <property type="term" value="F:glucosamine-6-phosphate deaminase activity"/>
    <property type="evidence" value="ECO:0007669"/>
    <property type="project" value="UniProtKB-UniRule"/>
</dbReference>
<dbReference type="GO" id="GO:0042802">
    <property type="term" value="F:identical protein binding"/>
    <property type="evidence" value="ECO:0007669"/>
    <property type="project" value="TreeGrafter"/>
</dbReference>
<dbReference type="GO" id="GO:0005975">
    <property type="term" value="P:carbohydrate metabolic process"/>
    <property type="evidence" value="ECO:0007669"/>
    <property type="project" value="InterPro"/>
</dbReference>
<dbReference type="GO" id="GO:0006043">
    <property type="term" value="P:glucosamine catabolic process"/>
    <property type="evidence" value="ECO:0007669"/>
    <property type="project" value="TreeGrafter"/>
</dbReference>
<dbReference type="GO" id="GO:0006046">
    <property type="term" value="P:N-acetylglucosamine catabolic process"/>
    <property type="evidence" value="ECO:0007669"/>
    <property type="project" value="TreeGrafter"/>
</dbReference>
<dbReference type="GO" id="GO:0019262">
    <property type="term" value="P:N-acetylneuraminate catabolic process"/>
    <property type="evidence" value="ECO:0007669"/>
    <property type="project" value="UniProtKB-UniRule"/>
</dbReference>
<dbReference type="CDD" id="cd01399">
    <property type="entry name" value="GlcN6P_deaminase"/>
    <property type="match status" value="1"/>
</dbReference>
<dbReference type="FunFam" id="3.40.50.1360:FF:000002">
    <property type="entry name" value="Glucosamine-6-phosphate deaminase"/>
    <property type="match status" value="1"/>
</dbReference>
<dbReference type="Gene3D" id="3.40.50.1360">
    <property type="match status" value="1"/>
</dbReference>
<dbReference type="HAMAP" id="MF_01241">
    <property type="entry name" value="GlcN6P_deamin"/>
    <property type="match status" value="1"/>
</dbReference>
<dbReference type="InterPro" id="IPR006148">
    <property type="entry name" value="Glc/Gal-6P_isomerase"/>
</dbReference>
<dbReference type="InterPro" id="IPR004547">
    <property type="entry name" value="Glucosamine6P_isomerase"/>
</dbReference>
<dbReference type="InterPro" id="IPR018321">
    <property type="entry name" value="Glucosamine6P_isomerase_CS"/>
</dbReference>
<dbReference type="InterPro" id="IPR037171">
    <property type="entry name" value="NagB/RpiA_transferase-like"/>
</dbReference>
<dbReference type="NCBIfam" id="TIGR00502">
    <property type="entry name" value="nagB"/>
    <property type="match status" value="1"/>
</dbReference>
<dbReference type="PANTHER" id="PTHR11280">
    <property type="entry name" value="GLUCOSAMINE-6-PHOSPHATE ISOMERASE"/>
    <property type="match status" value="1"/>
</dbReference>
<dbReference type="PANTHER" id="PTHR11280:SF5">
    <property type="entry name" value="GLUCOSAMINE-6-PHOSPHATE ISOMERASE"/>
    <property type="match status" value="1"/>
</dbReference>
<dbReference type="Pfam" id="PF01182">
    <property type="entry name" value="Glucosamine_iso"/>
    <property type="match status" value="1"/>
</dbReference>
<dbReference type="SUPFAM" id="SSF100950">
    <property type="entry name" value="NagB/RpiA/CoA transferase-like"/>
    <property type="match status" value="1"/>
</dbReference>
<dbReference type="PROSITE" id="PS01161">
    <property type="entry name" value="GLC_GALNAC_ISOMERASE"/>
    <property type="match status" value="1"/>
</dbReference>
<comment type="function">
    <text evidence="1">Catalyzes the reversible isomerization-deamination of glucosamine 6-phosphate (GlcN6P) to form fructose 6-phosphate (Fru6P) and ammonium ion.</text>
</comment>
<comment type="catalytic activity">
    <reaction evidence="1">
        <text>alpha-D-glucosamine 6-phosphate + H2O = beta-D-fructose 6-phosphate + NH4(+)</text>
        <dbReference type="Rhea" id="RHEA:12172"/>
        <dbReference type="ChEBI" id="CHEBI:15377"/>
        <dbReference type="ChEBI" id="CHEBI:28938"/>
        <dbReference type="ChEBI" id="CHEBI:57634"/>
        <dbReference type="ChEBI" id="CHEBI:75989"/>
        <dbReference type="EC" id="3.5.99.6"/>
    </reaction>
</comment>
<comment type="activity regulation">
    <text evidence="1">Allosterically activated by N-acetylglucosamine 6-phosphate (GlcNAc6P).</text>
</comment>
<comment type="pathway">
    <text evidence="1">Amino-sugar metabolism; N-acetylneuraminate degradation; D-fructose 6-phosphate from N-acetylneuraminate: step 5/5.</text>
</comment>
<comment type="subunit">
    <text evidence="1">Homohexamer.</text>
</comment>
<comment type="similarity">
    <text evidence="1">Belongs to the glucosamine/galactosamine-6-phosphate isomerase family. NagB subfamily.</text>
</comment>
<sequence length="266" mass="29730">MRLIPLNRAEQVGAWSAQHIVNRINAFNPTADRPFVLGLPTGGTPLNTYKKLIELHKAGEVSFKNVVTFNMDEYVGLPADHPESYRTFMHENFFNHIDIQPENINLLNGNAEDHEAECQRYEDKIKSYGRINLFMGGVGNDGHIAFNEPASSLSSRTRIKTLTEDTRIANSRFFGGDMNLVPEYSLTIGVGTLLDSEEIMILITGHNKGLALQAAVEGSVNHLWTVSALQLHPKSVIVCDEPSTQELKVKTVKYFQQLEAKNMEGF</sequence>
<gene>
    <name evidence="1" type="primary">nagB</name>
    <name type="ordered locus">VF_2357</name>
</gene>
<organism>
    <name type="scientific">Aliivibrio fischeri (strain ATCC 700601 / ES114)</name>
    <name type="common">Vibrio fischeri</name>
    <dbReference type="NCBI Taxonomy" id="312309"/>
    <lineage>
        <taxon>Bacteria</taxon>
        <taxon>Pseudomonadati</taxon>
        <taxon>Pseudomonadota</taxon>
        <taxon>Gammaproteobacteria</taxon>
        <taxon>Vibrionales</taxon>
        <taxon>Vibrionaceae</taxon>
        <taxon>Aliivibrio</taxon>
    </lineage>
</organism>
<evidence type="ECO:0000255" key="1">
    <source>
        <dbReference type="HAMAP-Rule" id="MF_01241"/>
    </source>
</evidence>
<keyword id="KW-0021">Allosteric enzyme</keyword>
<keyword id="KW-0119">Carbohydrate metabolism</keyword>
<keyword id="KW-0378">Hydrolase</keyword>
<keyword id="KW-1185">Reference proteome</keyword>
<name>NAGB_ALIF1</name>
<feature type="chain" id="PRO_1000067034" description="Glucosamine-6-phosphate deaminase">
    <location>
        <begin position="1"/>
        <end position="266"/>
    </location>
</feature>
<feature type="active site" description="Proton acceptor; for enolization step" evidence="1">
    <location>
        <position position="72"/>
    </location>
</feature>
<feature type="active site" description="For ring-opening step" evidence="1">
    <location>
        <position position="141"/>
    </location>
</feature>
<feature type="active site" description="Proton acceptor; for ring-opening step" evidence="1">
    <location>
        <position position="143"/>
    </location>
</feature>
<feature type="active site" description="For ring-opening step" evidence="1">
    <location>
        <position position="148"/>
    </location>
</feature>
<feature type="site" description="Part of the allosteric site" evidence="1">
    <location>
        <position position="151"/>
    </location>
</feature>
<feature type="site" description="Part of the allosteric site" evidence="1">
    <location>
        <position position="158"/>
    </location>
</feature>
<feature type="site" description="Part of the allosteric site" evidence="1">
    <location>
        <position position="160"/>
    </location>
</feature>
<feature type="site" description="Part of the allosteric site" evidence="1">
    <location>
        <position position="161"/>
    </location>
</feature>
<feature type="site" description="Part of the allosteric site" evidence="1">
    <location>
        <position position="254"/>
    </location>
</feature>
<protein>
    <recommendedName>
        <fullName evidence="1">Glucosamine-6-phosphate deaminase</fullName>
        <ecNumber evidence="1">3.5.99.6</ecNumber>
    </recommendedName>
    <alternativeName>
        <fullName evidence="1">GlcN6P deaminase</fullName>
        <shortName evidence="1">GNPDA</shortName>
    </alternativeName>
    <alternativeName>
        <fullName evidence="1">Glucosamine-6-phosphate isomerase</fullName>
    </alternativeName>
</protein>
<proteinExistence type="inferred from homology"/>
<accession>Q5E294</accession>
<reference key="1">
    <citation type="journal article" date="2005" name="Proc. Natl. Acad. Sci. U.S.A.">
        <title>Complete genome sequence of Vibrio fischeri: a symbiotic bacterium with pathogenic congeners.</title>
        <authorList>
            <person name="Ruby E.G."/>
            <person name="Urbanowski M."/>
            <person name="Campbell J."/>
            <person name="Dunn A."/>
            <person name="Faini M."/>
            <person name="Gunsalus R."/>
            <person name="Lostroh P."/>
            <person name="Lupp C."/>
            <person name="McCann J."/>
            <person name="Millikan D."/>
            <person name="Schaefer A."/>
            <person name="Stabb E."/>
            <person name="Stevens A."/>
            <person name="Visick K."/>
            <person name="Whistler C."/>
            <person name="Greenberg E.P."/>
        </authorList>
    </citation>
    <scope>NUCLEOTIDE SEQUENCE [LARGE SCALE GENOMIC DNA]</scope>
    <source>
        <strain>ATCC 700601 / ES114</strain>
    </source>
</reference>